<protein>
    <recommendedName>
        <fullName>SET-binding protein</fullName>
        <shortName>SEB</shortName>
    </recommendedName>
</protein>
<proteinExistence type="evidence at protein level"/>
<sequence length="1596" mass="175008">MESRETLSSSRQRGGESDFLPVSSAKPPAAPGCAGEPLLSTPGPGKGIPVGGERMEPEEEDELGSGRDVDSNSNADSEKWVAGDGLEEQEFSIKEANFTEGSLKLKIQTTKRAKKPPKNLENYICPPEIKITIKQSGDQKVSRAGKNSKATKEEERSHSKKKLLTASDLAASDLKGFQPQAYERPQKHSTLHYDTGLPQDFTGDTLKPKHQQKSSSQNHMDWSTNSDSGPVTQNCFISPESGRETASTSKIPALEPVASFAKAQGKKGSAGNTWSQLSNNNKDLLLGGVAPSPSSHSSPAPPSSSAECNGLQPLVDQDGGGTKEPPEPPTVGSKKKSSKKDVISQTIPNPDLDWVKNAQKAFDNTEGKREGYSADSAQEASPARQNVSSASNPENDSSHVRITIPIKAPSLDPTNHKRKKRQSIKAVVEKIMPEKALASGITMSSEVVNRILSNSEGNKKDPRVPKLSKMIENESPSVGLETGGNAEKVIPGGVSKPRKPPMVMTPPTCTDHSPSRKLPEIQHPKFAAKRRWTCSKPKPSTMLREAVMATSDKLMLEPPSAYPITPSSPLYTNTDSLTVITPVKKKRGRPKKQPLLTVETIHEGTSTSPVSPISREFPGTKKRKRRRNLAKLAQLVPGEDKPMSEMKFHKKVGKLGVLDKKTIKTINKMKTLKRKNILNQILSCSSSVALKAKAPPETSPGAAAIESKLGKQINVSKRGTIYIGKKRGRKPRAELPPPSEEPKTAIKHPRPVSSQPDVPAVPSNFQSLVASSPAAMHPLSTQLGGSNGNLSPASTETNFSELKTMPNLQPISALPTKTQKGIHSGTWKLSPPRLMANSPSHLCEIGSLKEITLSPVSESHSEETIPSDSGIGTDNNSTSDQAEKSSESRRRYSFDFCSLDNPEAIPSDTSTKNRHGHRQKHLIVDNFLAHESLKKPKHKRKRKSLQNRDDLQFLADLEELITKFQVFRISHRSYTFYHENPYPSIFRINFDHYYPVPYIQYDPLLYLRRTSDLKSKKKRGRPAKTNDTMTKVPFLQGFSYPIPSGSYYAPYGMPYTSMPMMNLGYYGQYPAPLYLSHTLGAASPFMRPTVPPPQFHTNSHVKMSGAAKHKAKHGVHLQGPVSMGLGDMQPSLNPPKVGSASLSSGRLHKRKHKHKHKHKEDRILGTHDNLSGLFAGKATGFSSHILSERLSSADKELPLVSEKNKHKEKQKHQHSEAGHKASKNNFEVDTLSTLSLSDAQHWTQAKEKGDLSSEPVDSCTKRYSGSGGDGGSTRSENLDVFSEMNPSNDKWDSDVSGSKRRSYEGFGTYREKDIQAFKMNRKERSSYDSSMSPGMPSPHLKVDQTAVHSKNEGSVPTMMTRKKPAAVDSVTIPPAPVLSLLAASAATSDAVGSSLKKRFKRREIEAIQCEVRKMCNYTKILSTKKNLDHVNKILKAKRLQRQSKTGNNFVKKRRGRPRKQPTQFDEDSRDQMPVLEKCIDLPSKRGQKPSLSPLVLEPAASQDTIMATIEAVIHMAREAPPLPPPPPPPLPPPPPPPLPPPPPLPKTPRGGKRKHKPQAPAQPPQQSPPQQPLPQEEEVKAKRQRKSRGSESEVLP</sequence>
<reference key="1">
    <citation type="journal article" date="1997" name="DNA Res.">
        <title>Prediction of the coding sequences of unidentified human genes. VIII. 78 new cDNA clones from brain which code for large proteins in vitro.</title>
        <authorList>
            <person name="Ishikawa K."/>
            <person name="Nagase T."/>
            <person name="Nakajima D."/>
            <person name="Seki N."/>
            <person name="Ohira M."/>
            <person name="Miyajima N."/>
            <person name="Tanaka A."/>
            <person name="Kotani H."/>
            <person name="Nomura N."/>
            <person name="Ohara O."/>
        </authorList>
    </citation>
    <scope>NUCLEOTIDE SEQUENCE [LARGE SCALE MRNA] (ISOFORM 1)</scope>
    <scope>VARIANT ILE-1101</scope>
    <source>
        <tissue>Brain</tissue>
    </source>
</reference>
<reference key="2">
    <citation type="journal article" date="2002" name="DNA Res.">
        <title>Construction of expression-ready cDNA clones for KIAA genes: manual curation of 330 KIAA cDNA clones.</title>
        <authorList>
            <person name="Nakajima D."/>
            <person name="Okazaki N."/>
            <person name="Yamakawa H."/>
            <person name="Kikuno R."/>
            <person name="Ohara O."/>
            <person name="Nagase T."/>
        </authorList>
    </citation>
    <scope>SEQUENCE REVISION</scope>
</reference>
<reference key="3">
    <citation type="journal article" date="2005" name="Nature">
        <title>DNA sequence and analysis of human chromosome 18.</title>
        <authorList>
            <person name="Nusbaum C."/>
            <person name="Zody M.C."/>
            <person name="Borowsky M.L."/>
            <person name="Kamal M."/>
            <person name="Kodira C.D."/>
            <person name="Taylor T.D."/>
            <person name="Whittaker C.A."/>
            <person name="Chang J.L."/>
            <person name="Cuomo C.A."/>
            <person name="Dewar K."/>
            <person name="FitzGerald M.G."/>
            <person name="Yang X."/>
            <person name="Abouelleil A."/>
            <person name="Allen N.R."/>
            <person name="Anderson S."/>
            <person name="Bloom T."/>
            <person name="Bugalter B."/>
            <person name="Butler J."/>
            <person name="Cook A."/>
            <person name="DeCaprio D."/>
            <person name="Engels R."/>
            <person name="Garber M."/>
            <person name="Gnirke A."/>
            <person name="Hafez N."/>
            <person name="Hall J.L."/>
            <person name="Norman C.H."/>
            <person name="Itoh T."/>
            <person name="Jaffe D.B."/>
            <person name="Kuroki Y."/>
            <person name="Lehoczky J."/>
            <person name="Lui A."/>
            <person name="Macdonald P."/>
            <person name="Mauceli E."/>
            <person name="Mikkelsen T.S."/>
            <person name="Naylor J.W."/>
            <person name="Nicol R."/>
            <person name="Nguyen C."/>
            <person name="Noguchi H."/>
            <person name="O'Leary S.B."/>
            <person name="Piqani B."/>
            <person name="Smith C.L."/>
            <person name="Talamas J.A."/>
            <person name="Topham K."/>
            <person name="Totoki Y."/>
            <person name="Toyoda A."/>
            <person name="Wain H.M."/>
            <person name="Young S.K."/>
            <person name="Zeng Q."/>
            <person name="Zimmer A.R."/>
            <person name="Fujiyama A."/>
            <person name="Hattori M."/>
            <person name="Birren B.W."/>
            <person name="Sakaki Y."/>
            <person name="Lander E.S."/>
        </authorList>
    </citation>
    <scope>NUCLEOTIDE SEQUENCE [LARGE SCALE GENOMIC DNA]</scope>
</reference>
<reference key="4">
    <citation type="journal article" date="2004" name="Genome Res.">
        <title>The status, quality, and expansion of the NIH full-length cDNA project: the Mammalian Gene Collection (MGC).</title>
        <authorList>
            <consortium name="The MGC Project Team"/>
        </authorList>
    </citation>
    <scope>NUCLEOTIDE SEQUENCE [LARGE SCALE MRNA] (ISOFORMS 1 AND 2)</scope>
    <scope>VARIANT ILE-1101</scope>
    <source>
        <tissue>Brain</tissue>
    </source>
</reference>
<reference key="5">
    <citation type="journal article" date="2001" name="Eur. J. Biochem.">
        <title>Identification and characterization of SEB, a novel protein that binds to the acute undifferentiated leukemia-associated protein SET.</title>
        <authorList>
            <person name="Minakuchi M."/>
            <person name="Kakazu N."/>
            <person name="Gorrin-Rivas M.J."/>
            <person name="Abe T."/>
            <person name="Copeland T.D."/>
            <person name="Ueda K."/>
            <person name="Adachi Y."/>
        </authorList>
    </citation>
    <scope>NUCLEOTIDE SEQUENCE [MRNA] OF 54-1596 (ISOFORM 1)</scope>
    <scope>INTERACTION WITH SET</scope>
    <scope>SUBCELLULAR LOCATION</scope>
    <scope>TISSUE SPECIFICITY</scope>
    <scope>VARIANT ILE-1101</scope>
    <source>
        <tissue>Cervix carcinoma</tissue>
    </source>
</reference>
<reference key="6">
    <citation type="journal article" date="2009" name="Sci. Signal.">
        <title>Quantitative phosphoproteomic analysis of T cell receptor signaling reveals system-wide modulation of protein-protein interactions.</title>
        <authorList>
            <person name="Mayya V."/>
            <person name="Lundgren D.H."/>
            <person name="Hwang S.-I."/>
            <person name="Rezaul K."/>
            <person name="Wu L."/>
            <person name="Eng J.K."/>
            <person name="Rodionov V."/>
            <person name="Han D.K."/>
        </authorList>
    </citation>
    <scope>IDENTIFICATION BY MASS SPECTROMETRY [LARGE SCALE ANALYSIS]</scope>
    <source>
        <tissue>Leukemic T-cell</tissue>
    </source>
</reference>
<reference key="7">
    <citation type="journal article" date="2014" name="Nat. Genet.">
        <title>Refining analyses of copy number variation identifies specific genes associated with developmental delay.</title>
        <authorList>
            <person name="Coe B.P."/>
            <person name="Witherspoon K."/>
            <person name="Rosenfeld J.A."/>
            <person name="van Bon B.W."/>
            <person name="Vulto-van Silfhout A.T."/>
            <person name="Bosco P."/>
            <person name="Friend K.L."/>
            <person name="Baker C."/>
            <person name="Buono S."/>
            <person name="Vissers L.E."/>
            <person name="Schuurs-Hoeijmakers J.H."/>
            <person name="Hoischen A."/>
            <person name="Pfundt R."/>
            <person name="Krumm N."/>
            <person name="Carvill G.L."/>
            <person name="Li D."/>
            <person name="Amaral D."/>
            <person name="Brown N."/>
            <person name="Lockhart P.J."/>
            <person name="Scheffer I.E."/>
            <person name="Alberti A."/>
            <person name="Shaw M."/>
            <person name="Pettinato R."/>
            <person name="Tervo R."/>
            <person name="de Leeuw N."/>
            <person name="Reijnders M.R."/>
            <person name="Torchia B.S."/>
            <person name="Peeters H."/>
            <person name="O'Roak B.J."/>
            <person name="Fichera M."/>
            <person name="Hehir-Kwa J.Y."/>
            <person name="Shendure J."/>
            <person name="Mefford H.C."/>
            <person name="Haan E."/>
            <person name="Gecz J."/>
            <person name="de Vries B.B."/>
            <person name="Romano C."/>
            <person name="Eichler E.E."/>
        </authorList>
    </citation>
    <scope>INVOLVEMENT IN MRD29</scope>
</reference>
<reference key="8">
    <citation type="journal article" date="2006" name="Science">
        <title>The consensus coding sequences of human breast and colorectal cancers.</title>
        <authorList>
            <person name="Sjoeblom T."/>
            <person name="Jones S."/>
            <person name="Wood L.D."/>
            <person name="Parsons D.W."/>
            <person name="Lin J."/>
            <person name="Barber T.D."/>
            <person name="Mandelker D."/>
            <person name="Leary R.J."/>
            <person name="Ptak J."/>
            <person name="Silliman N."/>
            <person name="Szabo S."/>
            <person name="Buckhaults P."/>
            <person name="Farrell C."/>
            <person name="Meeh P."/>
            <person name="Markowitz S.D."/>
            <person name="Willis J."/>
            <person name="Dawson D."/>
            <person name="Willson J.K.V."/>
            <person name="Gazdar A.F."/>
            <person name="Hartigan J."/>
            <person name="Wu L."/>
            <person name="Liu C."/>
            <person name="Parmigiani G."/>
            <person name="Park B.H."/>
            <person name="Bachman K.E."/>
            <person name="Papadopoulos N."/>
            <person name="Vogelstein B."/>
            <person name="Kinzler K.W."/>
            <person name="Velculescu V.E."/>
        </authorList>
    </citation>
    <scope>VARIANT [LARGE SCALE ANALYSIS] TRP-1162</scope>
</reference>
<reference key="9">
    <citation type="journal article" date="2010" name="Nat. Genet.">
        <title>De novo mutations of SETBP1 cause Schinzel-Giedion syndrome.</title>
        <authorList>
            <person name="Hoischen A."/>
            <person name="van Bon B.W."/>
            <person name="Gilissen C."/>
            <person name="Arts P."/>
            <person name="van Lier B."/>
            <person name="Steehouwer M."/>
            <person name="de Vries P."/>
            <person name="de Reuver R."/>
            <person name="Wieskamp N."/>
            <person name="Mortier G."/>
            <person name="Devriendt K."/>
            <person name="Amorim M.Z."/>
            <person name="Revencu N."/>
            <person name="Kidd A."/>
            <person name="Barbosa M."/>
            <person name="Turner A."/>
            <person name="Smith J."/>
            <person name="Oley C."/>
            <person name="Henderson A."/>
            <person name="Hayes I.M."/>
            <person name="Thompson E.M."/>
            <person name="Brunner H.G."/>
            <person name="de Vries B.B."/>
            <person name="Veltman J.A."/>
        </authorList>
    </citation>
    <scope>VARIANTS SGMFS ASN-868; ALA-868; ASP-870; SER-870 AND THR-871</scope>
</reference>
<reference key="10">
    <citation type="journal article" date="2013" name="Br. J. Haematol.">
        <title>Mutations in SETBP1 are recurrent in myelodysplastic syndromes and often coexist with cytogenetic markers associated with disease progression.</title>
        <authorList>
            <person name="Fernandez-Mercado M."/>
            <person name="Pellagatti A."/>
            <person name="Di Genua C."/>
            <person name="Larrayoz M.J."/>
            <person name="Winkelmann N."/>
            <person name="Aranaz P."/>
            <person name="Burns A."/>
            <person name="Schuh A."/>
            <person name="Calasanz M.J."/>
            <person name="Cross N.C."/>
            <person name="Boultwood J."/>
        </authorList>
    </citation>
    <scope>VARIANT MDS ARG-873</scope>
    <scope>VARIANTS AML ARG-870 AND SER-871</scope>
</reference>
<reference key="11">
    <citation type="journal article" date="2013" name="Leukemia">
        <title>SETBP1 mutations occur in 9% of MDS/MPN and in 4% of MPN cases and are strongly associated with atypical CML, monosomy 7, isochromosome i(17)(q10), ASXL1 and CBL mutations.</title>
        <authorList>
            <person name="Meggendorfer M."/>
            <person name="Bacher U."/>
            <person name="Alpermann T."/>
            <person name="Haferlach C."/>
            <person name="Kern W."/>
            <person name="Gambacorti-Passerini C."/>
            <person name="Haferlach T."/>
            <person name="Schnittger S."/>
        </authorList>
    </citation>
    <scope>VARIANTS MYELOID MALIGNANCIES LYS-858; ASN-868; TYR-868; GLY-868; ARG-869; SER-870; ASP-870; VAL-870; THR-871; ARG-873; ASN-874 AND ASN-908</scope>
</reference>
<reference key="12">
    <citation type="journal article" date="2013" name="Leukemia">
        <title>SETBP1 mutation analysis in 944 patients with MDS and AML. Hannover, Germany.</title>
        <authorList>
            <person name="Thol F."/>
            <person name="Suchanek K.J."/>
            <person name="Koenecke C."/>
            <person name="Stadler M."/>
            <person name="Platzbecker U."/>
            <person name="Thiede C."/>
            <person name="Schroeder T."/>
            <person name="Kobbe G."/>
            <person name="Kade S."/>
            <person name="Loffeld P."/>
            <person name="Banihosseini S."/>
            <person name="Bug G."/>
            <person name="Ottmann O."/>
            <person name="Hofmann W.K."/>
            <person name="Krauter J."/>
            <person name="Kroger N."/>
            <person name="Ganser A."/>
            <person name="Heuser M."/>
        </authorList>
    </citation>
    <scope>VARIANTS AML ALA-854 AND SER-870</scope>
    <scope>VARIANTS MDS ASN-868; ASN-869 AND SER-870</scope>
</reference>
<reference key="13">
    <citation type="journal article" date="2013" name="Nat. Genet.">
        <title>Recurrent SETBP1 mutations in atypical chronic myeloid leukemia.</title>
        <authorList>
            <person name="Piazza R."/>
            <person name="Valletta S."/>
            <person name="Winkelmann N."/>
            <person name="Redaelli S."/>
            <person name="Spinelli R."/>
            <person name="Pirola A."/>
            <person name="Antolini L."/>
            <person name="Mologni L."/>
            <person name="Donadoni C."/>
            <person name="Papaemmanuil E."/>
            <person name="Schnittger S."/>
            <person name="Kim D.W."/>
            <person name="Boultwood J."/>
            <person name="Rossi F."/>
            <person name="Gaipa G."/>
            <person name="De Martini G.P."/>
            <person name="di Celle P.F."/>
            <person name="Jang H.G."/>
            <person name="Fantin V."/>
            <person name="Bignell G.R."/>
            <person name="Magistroni V."/>
            <person name="Haferlach T."/>
            <person name="Pogliani E.M."/>
            <person name="Campbell P.J."/>
            <person name="Chase A.J."/>
            <person name="Tapper W.J."/>
            <person name="Cross N.C."/>
            <person name="Gambacorti-Passerini C."/>
        </authorList>
    </citation>
    <scope>VARIANTS ACML LYS-858; ASN-868; SER-870 AND THR-871</scope>
    <scope>VARIANTS HIS-1321 AND LEU-1377</scope>
    <scope>CHARACTERIZATION OF VARIANT ACML SER-870</scope>
</reference>
<reference key="14">
    <citation type="journal article" date="2013" name="Nat. Genet.">
        <title>Exome sequencing identifies secondary mutations of SETBP1 and JAK3 in juvenile myelomonocytic leukemia.</title>
        <authorList>
            <person name="Sakaguchi H."/>
            <person name="Okuno Y."/>
            <person name="Muramatsu H."/>
            <person name="Yoshida K."/>
            <person name="Shiraishi Y."/>
            <person name="Takahashi M."/>
            <person name="Kon A."/>
            <person name="Sanada M."/>
            <person name="Chiba K."/>
            <person name="Tanaka H."/>
            <person name="Makishima H."/>
            <person name="Wang X."/>
            <person name="Xu Y."/>
            <person name="Doisaki S."/>
            <person name="Hama A."/>
            <person name="Nakanishi K."/>
            <person name="Takahashi Y."/>
            <person name="Yoshida N."/>
            <person name="Maciejewski J.P."/>
            <person name="Miyano S."/>
            <person name="Ogawa S."/>
            <person name="Kojima S."/>
        </authorList>
    </citation>
    <scope>VARIANT JMML ASN-868</scope>
</reference>
<reference key="15">
    <citation type="journal article" date="2013" name="Nat. Genet.">
        <title>Somatic SETBP1 mutations in myeloid malignancies.</title>
        <authorList>
            <person name="Makishima H."/>
            <person name="Yoshida K."/>
            <person name="Nguyen N."/>
            <person name="Przychodzen B."/>
            <person name="Sanada M."/>
            <person name="Okuno Y."/>
            <person name="Ng K.P."/>
            <person name="Gudmundsson K.O."/>
            <person name="Vishwakarma B.A."/>
            <person name="Jerez A."/>
            <person name="Gomez-Segui I."/>
            <person name="Takahashi M."/>
            <person name="Shiraishi Y."/>
            <person name="Nagata Y."/>
            <person name="Guinta K."/>
            <person name="Mori H."/>
            <person name="Sekeres M.A."/>
            <person name="Chiba K."/>
            <person name="Tanaka H."/>
            <person name="Muramatsu H."/>
            <person name="Sakaguchi H."/>
            <person name="Paquette R.L."/>
            <person name="McDevitt M.A."/>
            <person name="Kojima S."/>
            <person name="Saunthararajah Y."/>
            <person name="Miyano S."/>
            <person name="Shih L.Y."/>
            <person name="Du Y."/>
            <person name="Ogawa S."/>
            <person name="Maciejewski J.P."/>
        </authorList>
    </citation>
    <scope>VARIANTS MYELOID MALIGNANCIES ASN-868; TYR-868; ASN-869; ALA-880 AND GLU-880</scope>
    <scope>TISSUE SPECIFICITY</scope>
</reference>
<feature type="chain" id="PRO_0000097698" description="SET-binding protein">
    <location>
        <begin position="1"/>
        <end position="1596"/>
    </location>
</feature>
<feature type="repeat" description="1">
    <location>
        <begin position="1520"/>
        <end position="1527"/>
    </location>
</feature>
<feature type="repeat" description="2">
    <location>
        <begin position="1528"/>
        <end position="1535"/>
    </location>
</feature>
<feature type="repeat" description="3">
    <location>
        <begin position="1536"/>
        <end position="1543"/>
    </location>
</feature>
<feature type="DNA-binding region" description="A.T hook 1">
    <location>
        <begin position="584"/>
        <end position="596"/>
    </location>
</feature>
<feature type="DNA-binding region" description="A.T hook 2">
    <location>
        <begin position="1016"/>
        <end position="1028"/>
    </location>
</feature>
<feature type="DNA-binding region" description="A.T hook 3">
    <location>
        <begin position="1451"/>
        <end position="1463"/>
    </location>
</feature>
<feature type="region of interest" description="Disordered" evidence="2">
    <location>
        <begin position="1"/>
        <end position="83"/>
    </location>
</feature>
<feature type="region of interest" description="Disordered" evidence="2">
    <location>
        <begin position="134"/>
        <end position="426"/>
    </location>
</feature>
<feature type="region of interest" description="Disordered" evidence="2">
    <location>
        <begin position="475"/>
        <end position="518"/>
    </location>
</feature>
<feature type="region of interest" description="Disordered" evidence="2">
    <location>
        <begin position="604"/>
        <end position="624"/>
    </location>
</feature>
<feature type="region of interest" description="Disordered" evidence="2">
    <location>
        <begin position="722"/>
        <end position="763"/>
    </location>
</feature>
<feature type="region of interest" description="Disordered" evidence="2">
    <location>
        <begin position="777"/>
        <end position="796"/>
    </location>
</feature>
<feature type="region of interest" description="Disordered" evidence="2">
    <location>
        <begin position="854"/>
        <end position="889"/>
    </location>
</feature>
<feature type="region of interest" description="Disordered" evidence="2">
    <location>
        <begin position="1134"/>
        <end position="1164"/>
    </location>
</feature>
<feature type="region of interest" description="Disordered" evidence="2">
    <location>
        <begin position="1202"/>
        <end position="1225"/>
    </location>
</feature>
<feature type="region of interest" description="Disordered" evidence="2">
    <location>
        <begin position="1245"/>
        <end position="1300"/>
    </location>
</feature>
<feature type="region of interest" description="Disordered" evidence="2">
    <location>
        <begin position="1325"/>
        <end position="1344"/>
    </location>
</feature>
<feature type="region of interest" description="Disordered" evidence="2">
    <location>
        <begin position="1440"/>
        <end position="1473"/>
    </location>
</feature>
<feature type="region of interest" description="Disordered" evidence="2">
    <location>
        <begin position="1518"/>
        <end position="1596"/>
    </location>
</feature>
<feature type="region of interest" description="3 X 8 AA tandem repeats of P-P-L-P-P-P-P-P">
    <location>
        <begin position="1520"/>
        <end position="1543"/>
    </location>
</feature>
<feature type="compositionally biased region" description="Polar residues" evidence="2">
    <location>
        <begin position="1"/>
        <end position="12"/>
    </location>
</feature>
<feature type="compositionally biased region" description="Basic and acidic residues" evidence="2">
    <location>
        <begin position="64"/>
        <end position="81"/>
    </location>
</feature>
<feature type="compositionally biased region" description="Low complexity" evidence="2">
    <location>
        <begin position="164"/>
        <end position="175"/>
    </location>
</feature>
<feature type="compositionally biased region" description="Polar residues" evidence="2">
    <location>
        <begin position="213"/>
        <end position="236"/>
    </location>
</feature>
<feature type="compositionally biased region" description="Polar residues" evidence="2">
    <location>
        <begin position="270"/>
        <end position="282"/>
    </location>
</feature>
<feature type="compositionally biased region" description="Low complexity" evidence="2">
    <location>
        <begin position="290"/>
        <end position="306"/>
    </location>
</feature>
<feature type="compositionally biased region" description="Basic and acidic residues" evidence="2">
    <location>
        <begin position="363"/>
        <end position="372"/>
    </location>
</feature>
<feature type="compositionally biased region" description="Polar residues" evidence="2">
    <location>
        <begin position="375"/>
        <end position="395"/>
    </location>
</feature>
<feature type="compositionally biased region" description="Polar residues" evidence="2">
    <location>
        <begin position="779"/>
        <end position="796"/>
    </location>
</feature>
<feature type="compositionally biased region" description="Polar residues" evidence="2">
    <location>
        <begin position="854"/>
        <end position="880"/>
    </location>
</feature>
<feature type="compositionally biased region" description="Basic residues" evidence="2">
    <location>
        <begin position="1146"/>
        <end position="1159"/>
    </location>
</feature>
<feature type="compositionally biased region" description="Basic residues" evidence="2">
    <location>
        <begin position="1450"/>
        <end position="1459"/>
    </location>
</feature>
<feature type="compositionally biased region" description="Pro residues" evidence="2">
    <location>
        <begin position="1520"/>
        <end position="1546"/>
    </location>
</feature>
<feature type="compositionally biased region" description="Pro residues" evidence="2">
    <location>
        <begin position="1560"/>
        <end position="1572"/>
    </location>
</feature>
<feature type="modified residue" description="N6-acetyllysine" evidence="1">
    <location>
        <position position="817"/>
    </location>
</feature>
<feature type="splice variant" id="VSP_039060" description="In isoform 2." evidence="15">
    <original>AYERPQKHSTLHYDTGLPQDFTGDTLKPKHQQKSSSQNHMDWSTNSDSGPVTQNCFISPESG</original>
    <variation>IKDSSKEEVWKRRGGQGIPFKKQFLSQERAMCFSCPRNPFPAKPGSLTLPFHSEPAVWAQEV</variation>
    <location>
        <begin position="181"/>
        <end position="242"/>
    </location>
</feature>
<feature type="splice variant" id="VSP_039061" description="In isoform 2." evidence="15">
    <location>
        <begin position="243"/>
        <end position="1596"/>
    </location>
</feature>
<feature type="sequence variant" id="VAR_024347" description="In dbSNP:rs11082414.">
    <original>V</original>
    <variation>L</variation>
    <location>
        <position position="231"/>
    </location>
</feature>
<feature type="sequence variant" id="VAR_069848" description="In AML." evidence="9">
    <original>S</original>
    <variation>A</variation>
    <location>
        <position position="854"/>
    </location>
</feature>
<feature type="sequence variant" id="VAR_069849" description="In ACML; somatic mutation in ACML and other myeloid malignancies; dbSNP:rs1178702025." evidence="7 8">
    <original>E</original>
    <variation>K</variation>
    <location>
        <position position="858"/>
    </location>
</feature>
<feature type="sequence variant" id="VAR_063806" description="In SGMFS; dbSNP:rs267607041." evidence="6">
    <original>D</original>
    <variation>A</variation>
    <location>
        <position position="868"/>
    </location>
</feature>
<feature type="sequence variant" id="VAR_069850" description="In myeloid malignancies." evidence="8">
    <original>D</original>
    <variation>G</variation>
    <location>
        <position position="868"/>
    </location>
</feature>
<feature type="sequence variant" id="VAR_063807" description="In SGMFS, ACML, JMML and MDS; also found in other myeloid malignancies; somatic mutation; dbSNP:rs267607042." evidence="6 7 8 9 10 11">
    <original>D</original>
    <variation>N</variation>
    <location>
        <position position="868"/>
    </location>
</feature>
<feature type="sequence variant" id="VAR_069851" description="In myeloid malignancies." evidence="8 11">
    <original>D</original>
    <variation>Y</variation>
    <location>
        <position position="868"/>
    </location>
</feature>
<feature type="sequence variant" id="VAR_069852" description="In MDS and myeloid malignancies." evidence="9 11">
    <original>S</original>
    <variation>N</variation>
    <location>
        <position position="869"/>
    </location>
</feature>
<feature type="sequence variant" id="VAR_069853" description="In myeloid malignancies." evidence="8">
    <original>S</original>
    <variation>R</variation>
    <location>
        <position position="869"/>
    </location>
</feature>
<feature type="sequence variant" id="VAR_063808" description="In SGMFS; dbSNP:rs267607039." evidence="6 8">
    <original>G</original>
    <variation>D</variation>
    <location>
        <position position="870"/>
    </location>
</feature>
<feature type="sequence variant" id="VAR_069854" description="In AML." evidence="12">
    <original>G</original>
    <variation>R</variation>
    <location>
        <position position="870"/>
    </location>
</feature>
<feature type="sequence variant" id="VAR_063809" description="In SGMFS, ACML, MDS and AML; somatic mutation in ACML and other myeloid malignancies; results in higher protein levels; cells expressing this mutant exhibit higher proliferation rates than those expressing the wild-type protein; dbSNP:rs267607040." evidence="6 7 8 9">
    <original>G</original>
    <variation>S</variation>
    <location>
        <position position="870"/>
    </location>
</feature>
<feature type="sequence variant" id="VAR_069855" description="In myeloid malignancies." evidence="8">
    <original>G</original>
    <variation>V</variation>
    <location>
        <position position="870"/>
    </location>
</feature>
<feature type="sequence variant" id="VAR_069856" description="In AML; dbSNP:rs267607038." evidence="12">
    <original>I</original>
    <variation>S</variation>
    <location>
        <position position="871"/>
    </location>
</feature>
<feature type="sequence variant" id="VAR_063810" description="In SGMFS and ACML; somatic mutation in ACML and other myeloid malignancies; dbSNP:rs267607038." evidence="6 7 8">
    <original>I</original>
    <variation>T</variation>
    <location>
        <position position="871"/>
    </location>
</feature>
<feature type="sequence variant" id="VAR_069857" description="In MDS and myeloid malignancies." evidence="8 12">
    <original>T</original>
    <variation>R</variation>
    <location>
        <position position="873"/>
    </location>
</feature>
<feature type="sequence variant" id="VAR_069858" description="In myeloid malignancies." evidence="8">
    <original>D</original>
    <variation>N</variation>
    <location>
        <position position="874"/>
    </location>
</feature>
<feature type="sequence variant" id="VAR_069859" description="In myeloid malignancies." evidence="11">
    <original>D</original>
    <variation>A</variation>
    <location>
        <position position="880"/>
    </location>
</feature>
<feature type="sequence variant" id="VAR_069860" description="In myeloid malignancies." evidence="11">
    <original>D</original>
    <variation>E</variation>
    <location>
        <position position="880"/>
    </location>
</feature>
<feature type="sequence variant" id="VAR_069861" description="In myeloid malignancies.">
    <original>D</original>
    <variation>N</variation>
    <location>
        <position position="880"/>
    </location>
</feature>
<feature type="sequence variant" id="VAR_069862" description="In myeloid malignancies; dbSNP:rs559186877." evidence="8">
    <original>D</original>
    <variation>N</variation>
    <location>
        <position position="908"/>
    </location>
</feature>
<feature type="sequence variant" id="VAR_054646" description="In dbSNP:rs3744825." evidence="3 4 14">
    <original>V</original>
    <variation>I</variation>
    <location>
        <position position="1101"/>
    </location>
</feature>
<feature type="sequence variant" id="VAR_020317" description="In dbSNP:rs1064204.">
    <original>P</original>
    <variation>T</variation>
    <location>
        <position position="1130"/>
    </location>
</feature>
<feature type="sequence variant" id="VAR_035987" description="In a colorectal cancer sample; somatic mutation; dbSNP:rs778181199." evidence="5">
    <original>R</original>
    <variation>W</variation>
    <location>
        <position position="1162"/>
    </location>
</feature>
<feature type="sequence variant" id="VAR_069863" description="In dbSNP:rs149638556." evidence="7">
    <original>R</original>
    <variation>H</variation>
    <location>
        <position position="1321"/>
    </location>
</feature>
<feature type="sequence variant" id="VAR_069864" description="In dbSNP:rs77518617." evidence="7">
    <original>V</original>
    <variation>L</variation>
    <location>
        <position position="1377"/>
    </location>
</feature>
<evidence type="ECO:0000250" key="1">
    <source>
        <dbReference type="UniProtKB" id="Q9Z180"/>
    </source>
</evidence>
<evidence type="ECO:0000256" key="2">
    <source>
        <dbReference type="SAM" id="MobiDB-lite"/>
    </source>
</evidence>
<evidence type="ECO:0000269" key="3">
    <source>
    </source>
</evidence>
<evidence type="ECO:0000269" key="4">
    <source>
    </source>
</evidence>
<evidence type="ECO:0000269" key="5">
    <source>
    </source>
</evidence>
<evidence type="ECO:0000269" key="6">
    <source>
    </source>
</evidence>
<evidence type="ECO:0000269" key="7">
    <source>
    </source>
</evidence>
<evidence type="ECO:0000269" key="8">
    <source>
    </source>
</evidence>
<evidence type="ECO:0000269" key="9">
    <source>
    </source>
</evidence>
<evidence type="ECO:0000269" key="10">
    <source>
    </source>
</evidence>
<evidence type="ECO:0000269" key="11">
    <source>
    </source>
</evidence>
<evidence type="ECO:0000269" key="12">
    <source>
    </source>
</evidence>
<evidence type="ECO:0000269" key="13">
    <source>
    </source>
</evidence>
<evidence type="ECO:0000269" key="14">
    <source>
    </source>
</evidence>
<evidence type="ECO:0000303" key="15">
    <source>
    </source>
</evidence>
<evidence type="ECO:0000305" key="16"/>
<dbReference type="EMBL" id="AB007897">
    <property type="protein sequence ID" value="BAA24826.2"/>
    <property type="status" value="ALT_INIT"/>
    <property type="molecule type" value="mRNA"/>
</dbReference>
<dbReference type="EMBL" id="AC015954">
    <property type="status" value="NOT_ANNOTATED_CDS"/>
    <property type="molecule type" value="Genomic_DNA"/>
</dbReference>
<dbReference type="EMBL" id="AC021766">
    <property type="status" value="NOT_ANNOTATED_CDS"/>
    <property type="molecule type" value="Genomic_DNA"/>
</dbReference>
<dbReference type="EMBL" id="AC090376">
    <property type="status" value="NOT_ANNOTATED_CDS"/>
    <property type="molecule type" value="Genomic_DNA"/>
</dbReference>
<dbReference type="EMBL" id="AC105074">
    <property type="status" value="NOT_ANNOTATED_CDS"/>
    <property type="molecule type" value="Genomic_DNA"/>
</dbReference>
<dbReference type="EMBL" id="AC120049">
    <property type="status" value="NOT_ANNOTATED_CDS"/>
    <property type="molecule type" value="Genomic_DNA"/>
</dbReference>
<dbReference type="EMBL" id="BC062338">
    <property type="protein sequence ID" value="AAH62338.1"/>
    <property type="molecule type" value="mRNA"/>
</dbReference>
<dbReference type="EMBL" id="BC146776">
    <property type="protein sequence ID" value="AAI46777.1"/>
    <property type="status" value="ALT_INIT"/>
    <property type="molecule type" value="mRNA"/>
</dbReference>
<dbReference type="EMBL" id="AB022660">
    <property type="protein sequence ID" value="BAA82444.1"/>
    <property type="status" value="ALT_INIT"/>
    <property type="molecule type" value="mRNA"/>
</dbReference>
<dbReference type="CCDS" id="CCDS11923.2">
    <molecule id="Q9Y6X0-1"/>
</dbReference>
<dbReference type="CCDS" id="CCDS45859.1">
    <molecule id="Q9Y6X0-2"/>
</dbReference>
<dbReference type="PIR" id="T00063">
    <property type="entry name" value="T00063"/>
</dbReference>
<dbReference type="RefSeq" id="NP_001123582.1">
    <molecule id="Q9Y6X0-2"/>
    <property type="nucleotide sequence ID" value="NM_001130110.2"/>
</dbReference>
<dbReference type="RefSeq" id="NP_001366070.1">
    <molecule id="Q9Y6X0-1"/>
    <property type="nucleotide sequence ID" value="NM_001379141.1"/>
</dbReference>
<dbReference type="RefSeq" id="NP_001366071.1">
    <molecule id="Q9Y6X0-1"/>
    <property type="nucleotide sequence ID" value="NM_001379142.1"/>
</dbReference>
<dbReference type="RefSeq" id="NP_056374.2">
    <molecule id="Q9Y6X0-1"/>
    <property type="nucleotide sequence ID" value="NM_015559.3"/>
</dbReference>
<dbReference type="RefSeq" id="XP_024306922.1">
    <molecule id="Q9Y6X0-1"/>
    <property type="nucleotide sequence ID" value="XM_024451154.2"/>
</dbReference>
<dbReference type="RefSeq" id="XP_047293432.1">
    <molecule id="Q9Y6X0-1"/>
    <property type="nucleotide sequence ID" value="XM_047437476.1"/>
</dbReference>
<dbReference type="RefSeq" id="XP_054174488.1">
    <molecule id="Q9Y6X0-1"/>
    <property type="nucleotide sequence ID" value="XM_054318513.1"/>
</dbReference>
<dbReference type="RefSeq" id="XP_054174489.1">
    <molecule id="Q9Y6X0-1"/>
    <property type="nucleotide sequence ID" value="XM_054318514.1"/>
</dbReference>
<dbReference type="BioGRID" id="117506">
    <property type="interactions" value="30"/>
</dbReference>
<dbReference type="FunCoup" id="Q9Y6X0">
    <property type="interactions" value="1617"/>
</dbReference>
<dbReference type="IntAct" id="Q9Y6X0">
    <property type="interactions" value="15"/>
</dbReference>
<dbReference type="MINT" id="Q9Y6X0"/>
<dbReference type="STRING" id="9606.ENSP00000497406"/>
<dbReference type="MoonDB" id="Q9Y6X0">
    <property type="type" value="Predicted"/>
</dbReference>
<dbReference type="GlyGen" id="Q9Y6X0">
    <property type="glycosylation" value="5 sites, 1 O-linked glycan (1 site)"/>
</dbReference>
<dbReference type="iPTMnet" id="Q9Y6X0"/>
<dbReference type="PhosphoSitePlus" id="Q9Y6X0"/>
<dbReference type="BioMuta" id="SETBP1"/>
<dbReference type="DMDM" id="294862494"/>
<dbReference type="jPOST" id="Q9Y6X0"/>
<dbReference type="MassIVE" id="Q9Y6X0"/>
<dbReference type="PaxDb" id="9606-ENSP00000282030"/>
<dbReference type="PeptideAtlas" id="Q9Y6X0"/>
<dbReference type="ProteomicsDB" id="86807">
    <molecule id="Q9Y6X0-1"/>
</dbReference>
<dbReference type="Antibodypedia" id="22406">
    <property type="antibodies" value="169 antibodies from 25 providers"/>
</dbReference>
<dbReference type="DNASU" id="26040"/>
<dbReference type="Ensembl" id="ENST00000426838.8">
    <molecule id="Q9Y6X0-2"/>
    <property type="protein sequence ID" value="ENSP00000390687.3"/>
    <property type="gene ID" value="ENSG00000152217.20"/>
</dbReference>
<dbReference type="Ensembl" id="ENST00000649279.2">
    <molecule id="Q9Y6X0-1"/>
    <property type="protein sequence ID" value="ENSP00000497406.1"/>
    <property type="gene ID" value="ENSG00000152217.20"/>
</dbReference>
<dbReference type="Ensembl" id="ENST00000677068.1">
    <molecule id="Q9Y6X0-1"/>
    <property type="protein sequence ID" value="ENSP00000504398.1"/>
    <property type="gene ID" value="ENSG00000152217.20"/>
</dbReference>
<dbReference type="Ensembl" id="ENST00000677077.1">
    <molecule id="Q9Y6X0-1"/>
    <property type="protein sequence ID" value="ENSP00000503656.1"/>
    <property type="gene ID" value="ENSG00000152217.20"/>
</dbReference>
<dbReference type="Ensembl" id="ENST00000677130.1">
    <molecule id="Q9Y6X0-1"/>
    <property type="protein sequence ID" value="ENSP00000503094.1"/>
    <property type="gene ID" value="ENSG00000152217.20"/>
</dbReference>
<dbReference type="Ensembl" id="ENST00000678152.1">
    <molecule id="Q9Y6X0-1"/>
    <property type="protein sequence ID" value="ENSP00000502995.1"/>
    <property type="gene ID" value="ENSG00000152217.20"/>
</dbReference>
<dbReference type="GeneID" id="26040"/>
<dbReference type="KEGG" id="hsa:26040"/>
<dbReference type="MANE-Select" id="ENST00000649279.2">
    <property type="protein sequence ID" value="ENSP00000497406.1"/>
    <property type="RefSeq nucleotide sequence ID" value="NM_015559.3"/>
    <property type="RefSeq protein sequence ID" value="NP_056374.2"/>
</dbReference>
<dbReference type="UCSC" id="uc002lay.3">
    <molecule id="Q9Y6X0-1"/>
    <property type="organism name" value="human"/>
</dbReference>
<dbReference type="AGR" id="HGNC:15573"/>
<dbReference type="CTD" id="26040"/>
<dbReference type="DisGeNET" id="26040"/>
<dbReference type="GeneCards" id="SETBP1"/>
<dbReference type="GeneReviews" id="SETBP1"/>
<dbReference type="HGNC" id="HGNC:15573">
    <property type="gene designation" value="SETBP1"/>
</dbReference>
<dbReference type="HPA" id="ENSG00000152217">
    <property type="expression patterns" value="Low tissue specificity"/>
</dbReference>
<dbReference type="MalaCards" id="SETBP1"/>
<dbReference type="MIM" id="269150">
    <property type="type" value="phenotype"/>
</dbReference>
<dbReference type="MIM" id="601626">
    <property type="type" value="phenotype"/>
</dbReference>
<dbReference type="MIM" id="607785">
    <property type="type" value="phenotype"/>
</dbReference>
<dbReference type="MIM" id="608232">
    <property type="type" value="phenotype"/>
</dbReference>
<dbReference type="MIM" id="611060">
    <property type="type" value="gene"/>
</dbReference>
<dbReference type="MIM" id="614286">
    <property type="type" value="phenotype"/>
</dbReference>
<dbReference type="MIM" id="616078">
    <property type="type" value="phenotype"/>
</dbReference>
<dbReference type="neXtProt" id="NX_Q9Y6X0"/>
<dbReference type="OpenTargets" id="ENSG00000152217"/>
<dbReference type="Orphanet" id="436151">
    <property type="disease" value="Intellectual disability-expressive aphasia-facial dysmorphism syndrome"/>
</dbReference>
<dbReference type="Orphanet" id="798">
    <property type="disease" value="Schinzel-Giedion syndrome"/>
</dbReference>
<dbReference type="PharmGKB" id="PA37982"/>
<dbReference type="VEuPathDB" id="HostDB:ENSG00000152217"/>
<dbReference type="eggNOG" id="KOG1083">
    <property type="taxonomic scope" value="Eukaryota"/>
</dbReference>
<dbReference type="GeneTree" id="ENSGT00940000158784"/>
<dbReference type="HOGENOM" id="CLU_005903_0_0_1"/>
<dbReference type="InParanoid" id="Q9Y6X0"/>
<dbReference type="OMA" id="RHSHRPK"/>
<dbReference type="OrthoDB" id="9937744at2759"/>
<dbReference type="PAN-GO" id="Q9Y6X0">
    <property type="GO annotations" value="5 GO annotations based on evolutionary models"/>
</dbReference>
<dbReference type="PhylomeDB" id="Q9Y6X0"/>
<dbReference type="TreeFam" id="TF106416"/>
<dbReference type="PathwayCommons" id="Q9Y6X0"/>
<dbReference type="SignaLink" id="Q9Y6X0"/>
<dbReference type="SIGNOR" id="Q9Y6X0"/>
<dbReference type="BioGRID-ORCS" id="26040">
    <property type="hits" value="11 hits in 1154 CRISPR screens"/>
</dbReference>
<dbReference type="ChiTaRS" id="SETBP1">
    <property type="organism name" value="human"/>
</dbReference>
<dbReference type="GenomeRNAi" id="26040"/>
<dbReference type="Pharos" id="Q9Y6X0">
    <property type="development level" value="Tbio"/>
</dbReference>
<dbReference type="PRO" id="PR:Q9Y6X0"/>
<dbReference type="Proteomes" id="UP000005640">
    <property type="component" value="Chromosome 18"/>
</dbReference>
<dbReference type="RNAct" id="Q9Y6X0">
    <property type="molecule type" value="protein"/>
</dbReference>
<dbReference type="Bgee" id="ENSG00000152217">
    <property type="expression patterns" value="Expressed in ventricular zone and 202 other cell types or tissues"/>
</dbReference>
<dbReference type="ExpressionAtlas" id="Q9Y6X0">
    <property type="expression patterns" value="baseline and differential"/>
</dbReference>
<dbReference type="GO" id="GO:0005829">
    <property type="term" value="C:cytosol"/>
    <property type="evidence" value="ECO:0000314"/>
    <property type="project" value="HPA"/>
</dbReference>
<dbReference type="GO" id="GO:0016604">
    <property type="term" value="C:nuclear body"/>
    <property type="evidence" value="ECO:0000314"/>
    <property type="project" value="HPA"/>
</dbReference>
<dbReference type="GO" id="GO:0005654">
    <property type="term" value="C:nucleoplasm"/>
    <property type="evidence" value="ECO:0000314"/>
    <property type="project" value="HPA"/>
</dbReference>
<dbReference type="GO" id="GO:0005634">
    <property type="term" value="C:nucleus"/>
    <property type="evidence" value="ECO:0000314"/>
    <property type="project" value="MGI"/>
</dbReference>
<dbReference type="GO" id="GO:0003677">
    <property type="term" value="F:DNA binding"/>
    <property type="evidence" value="ECO:0007669"/>
    <property type="project" value="UniProtKB-KW"/>
</dbReference>
<dbReference type="GO" id="GO:0042800">
    <property type="term" value="F:histone H3K4 methyltransferase activity"/>
    <property type="evidence" value="ECO:0000318"/>
    <property type="project" value="GO_Central"/>
</dbReference>
<dbReference type="GO" id="GO:0006355">
    <property type="term" value="P:regulation of DNA-templated transcription"/>
    <property type="evidence" value="ECO:0000318"/>
    <property type="project" value="GO_Central"/>
</dbReference>
<dbReference type="InterPro" id="IPR017956">
    <property type="entry name" value="AT_hook_DNA-bd_motif"/>
</dbReference>
<dbReference type="PANTHER" id="PTHR46147">
    <property type="entry name" value="HISTONE-LYSINE N-METHYLTRANSFERASE ASH1"/>
    <property type="match status" value="1"/>
</dbReference>
<dbReference type="PANTHER" id="PTHR46147:SF2">
    <property type="entry name" value="SET-BINDING PROTEIN"/>
    <property type="match status" value="1"/>
</dbReference>
<dbReference type="SMART" id="SM00384">
    <property type="entry name" value="AT_hook"/>
    <property type="match status" value="3"/>
</dbReference>
<accession>Q9Y6X0</accession>
<accession>A6H8W5</accession>
<accession>Q6P6C3</accession>
<accession>Q9UEF3</accession>
<gene>
    <name type="primary">SETBP1</name>
    <name type="synonym">KIAA0437</name>
</gene>
<organism>
    <name type="scientific">Homo sapiens</name>
    <name type="common">Human</name>
    <dbReference type="NCBI Taxonomy" id="9606"/>
    <lineage>
        <taxon>Eukaryota</taxon>
        <taxon>Metazoa</taxon>
        <taxon>Chordata</taxon>
        <taxon>Craniata</taxon>
        <taxon>Vertebrata</taxon>
        <taxon>Euteleostomi</taxon>
        <taxon>Mammalia</taxon>
        <taxon>Eutheria</taxon>
        <taxon>Euarchontoglires</taxon>
        <taxon>Primates</taxon>
        <taxon>Haplorrhini</taxon>
        <taxon>Catarrhini</taxon>
        <taxon>Hominidae</taxon>
        <taxon>Homo</taxon>
    </lineage>
</organism>
<comment type="subunit">
    <text evidence="3">Interacts with SET.</text>
</comment>
<comment type="interaction">
    <interactant intactId="EBI-2548259">
        <id>Q9Y6X0</id>
    </interactant>
    <interactant intactId="EBI-10318388">
        <id>Q9P1C9</id>
        <label>KIAA1147</label>
    </interactant>
    <organismsDiffer>false</organismsDiffer>
    <experiments>3</experiments>
</comment>
<comment type="interaction">
    <interactant intactId="EBI-2548259">
        <id>Q9Y6X0</id>
    </interactant>
    <interactant intactId="EBI-742388">
        <id>Q9H8W4</id>
        <label>PLEKHF2</label>
    </interactant>
    <organismsDiffer>false</organismsDiffer>
    <experiments>3</experiments>
</comment>
<comment type="interaction">
    <interactant intactId="EBI-2548259">
        <id>Q9Y6X0</id>
    </interactant>
    <interactant intactId="EBI-10313181">
        <id>Q9NS26</id>
        <label>SPANXA2</label>
    </interactant>
    <organismsDiffer>false</organismsDiffer>
    <experiments>3</experiments>
</comment>
<comment type="interaction">
    <interactant intactId="EBI-2548259">
        <id>Q9Y6X0</id>
    </interactant>
    <interactant intactId="EBI-10316585">
        <id>Q9NY87</id>
        <label>SPANXC</label>
    </interactant>
    <organismsDiffer>false</organismsDiffer>
    <experiments>3</experiments>
</comment>
<comment type="interaction">
    <interactant intactId="EBI-2548259">
        <id>Q9Y6X0</id>
    </interactant>
    <interactant intactId="EBI-10301202">
        <id>Q9BXN6</id>
        <label>SPANXD</label>
    </interactant>
    <organismsDiffer>false</organismsDiffer>
    <experiments>3</experiments>
</comment>
<comment type="interaction">
    <interactant intactId="EBI-2548259">
        <id>Q9Y6X0</id>
    </interactant>
    <interactant intactId="EBI-10175576">
        <id>G2XKQ0</id>
        <label>SUMO1P1</label>
    </interactant>
    <organismsDiffer>false</organismsDiffer>
    <experiments>3</experiments>
</comment>
<comment type="interaction">
    <interactant intactId="EBI-2548259">
        <id>Q9Y6X0</id>
    </interactant>
    <interactant intactId="EBI-10180829">
        <id>Q7KZS0</id>
        <label>UBE2I</label>
    </interactant>
    <organismsDiffer>false</organismsDiffer>
    <experiments>3</experiments>
</comment>
<comment type="interaction">
    <interactant intactId="EBI-2548259">
        <id>Q9Y6X0</id>
    </interactant>
    <interactant intactId="EBI-2340004">
        <id>Q9HD64</id>
        <label>XAGE1B</label>
    </interactant>
    <organismsDiffer>false</organismsDiffer>
    <experiments>3</experiments>
</comment>
<comment type="interaction">
    <interactant intactId="EBI-2548259">
        <id>Q9Y6X0</id>
    </interactant>
    <interactant intactId="EBI-2842031">
        <id>Q8IY57</id>
        <label>YAF2</label>
    </interactant>
    <organismsDiffer>false</organismsDiffer>
    <experiments>3</experiments>
</comment>
<comment type="interaction">
    <interactant intactId="EBI-12235818">
        <id>Q9Y6X0-2</id>
    </interactant>
    <interactant intactId="EBI-742388">
        <id>Q9H8W4</id>
        <label>PLEKHF2</label>
    </interactant>
    <organismsDiffer>false</organismsDiffer>
    <experiments>6</experiments>
</comment>
<comment type="interaction">
    <interactant intactId="EBI-12235818">
        <id>Q9Y6X0-2</id>
    </interactant>
    <interactant intactId="EBI-10313181">
        <id>Q9NS26</id>
        <label>SPANXA2</label>
    </interactant>
    <organismsDiffer>false</organismsDiffer>
    <experiments>3</experiments>
</comment>
<comment type="interaction">
    <interactant intactId="EBI-12235818">
        <id>Q9Y6X0-2</id>
    </interactant>
    <interactant intactId="EBI-10301202">
        <id>Q9BXN6</id>
        <label>SPANXD</label>
    </interactant>
    <organismsDiffer>false</organismsDiffer>
    <experiments>3</experiments>
</comment>
<comment type="interaction">
    <interactant intactId="EBI-12235818">
        <id>Q9Y6X0-2</id>
    </interactant>
    <interactant intactId="EBI-10180829">
        <id>Q7KZS0</id>
        <label>UBE2I</label>
    </interactant>
    <organismsDiffer>false</organismsDiffer>
    <experiments>3</experiments>
</comment>
<comment type="subcellular location">
    <subcellularLocation>
        <location evidence="3">Nucleus</location>
    </subcellularLocation>
</comment>
<comment type="alternative products">
    <event type="alternative splicing"/>
    <isoform>
        <id>Q9Y6X0-1</id>
        <name>1</name>
        <sequence type="displayed"/>
    </isoform>
    <isoform>
        <id>Q9Y6X0-2</id>
        <name>2</name>
        <sequence type="described" ref="VSP_039060 VSP_039061"/>
    </isoform>
</comment>
<comment type="tissue specificity">
    <text evidence="3 11">Expressed in numerous tissues. Expressed at low levels in myeloid and monocytic cells as well as in CD34+ cells; expression levels are higher in myeloid malignancies.</text>
</comment>
<comment type="disease" evidence="6">
    <disease id="DI-02836">
        <name>Schinzel-Giedion midface retraction syndrome</name>
        <acronym>SGMFS</acronym>
        <description>A disorder characterized by severe intellectual disability, distinctive facial features, and multiple congenital malformations including skeletal abnormalities, genitourinary and renal malformations, cardiac defects, as well as a higher-than-normal prevalence of tumors, notably neuroepithelial neoplasia.</description>
        <dbReference type="MIM" id="269150"/>
    </disease>
    <text>The disease is caused by variants affecting the gene represented in this entry.</text>
</comment>
<comment type="disease">
    <text evidence="8 11">SETBP1 somatic mutations are frequently found in myeloid malignancies. They cause gain of function associated with myeloid leukemic transformation (PubMed:23832012). Myeloid malignancies are separated into three main categories: myeloproliferative neoplasms (MPN) characterized by cellular proliferation of one or more hematologic cell lines in the peripheral blood, myelodysplastic syndromes (MDS) and MDS/MPN. The MDS/MPN category shows overlapping characteristics of both MDS and MPN and includes chronic myelomonocytic leukemia (CMML), juvenile myelomonocytic leukemia, atypical chronic myeloid leukemia (ACML) and unclassified MDS/MPN (PubMed:23628959).</text>
</comment>
<comment type="disease" evidence="9 12">
    <disease id="DI-03291">
        <name>Myelodysplastic syndrome</name>
        <acronym>MDS</acronym>
        <description>A heterogeneous group of closely related clonal hematopoietic disorders. All are characterized by a hypercellular or hypocellular bone marrow with impaired morphology and maturation, dysplasia of the myeloid, megakaryocytic and/or erythroid lineages, and peripheral blood cytopenias resulting from ineffective blood cell production. Included diseases are: refractory anemia (RA), refractory anemia with ringed sideroblasts (RARS), refractory anemia with excess blasts (RAEB), refractory cytopenia with multilineage dysplasia and ringed sideroblasts (RCMD-RS); chronic myelomonocytic leukemia (CMML) is a myelodysplastic/myeloproliferative disease. MDS is considered a premalignant condition in a subgroup of patients that often progresses to acute myeloid leukemia (AML).</description>
        <dbReference type="MIM" id="614286"/>
    </disease>
    <text>The gene represented in this entry is involved in disease pathogenesis.</text>
</comment>
<comment type="disease" evidence="13">
    <disease id="DI-04252">
        <name>Intellectual developmental disorder, autosomal dominant 29</name>
        <acronym>MRD29</acronym>
        <description>A disorder characterized by significantly below average general intellectual functioning associated with impairments in adaptive behavior and manifested during the developmental period. MRD29 patients manifest severe intellectual disability, behavioral difficulties, speech and motor delays, and dysmorphic facial features.</description>
        <dbReference type="MIM" id="616078"/>
    </disease>
    <text>The disease is caused by variants affecting the gene represented in this entry.</text>
</comment>
<comment type="disease" evidence="9 12">
    <disease id="DI-01171">
        <name>Leukemia, acute myelogenous</name>
        <acronym>AML</acronym>
        <description>A subtype of acute leukemia, a cancer of the white blood cells. AML is a malignant disease of bone marrow characterized by maturational arrest of hematopoietic precursors at an early stage of development. Clonal expansion of myeloid blasts occurs in bone marrow, blood, and other tissue. Myelogenous leukemias develop from changes in cells that normally produce neutrophils, basophils, eosinophils and monocytes.</description>
        <dbReference type="MIM" id="601626"/>
    </disease>
    <text>The gene represented in this entry is involved in disease pathogenesis.</text>
</comment>
<comment type="disease" evidence="7">
    <disease id="DI-03829">
        <name>Leukemia, chronic myeloid, atypical</name>
        <acronym>ACML</acronym>
        <description>A myeloproliferative disorder that shares clinical and laboratory features with chronic myeloid leukemia but lacks the pathognomonic Philadelphia chromosome and the corresponding BCR/ABL1 fusion transcript. Features include myeloid predominance in the bone marrow, myeloid proliferation and low leukocyte alkaline phosphatase value, splenomegaly, hepatomegaly, elevated white blood cell count. Enlarged spleen may also be associated with a hypermetabolic state, fever, weight loss, and chronic fatigue. The enlarged liver may contribute to the patient's weight loss.</description>
        <dbReference type="MIM" id="608232"/>
    </disease>
    <text>The gene represented in this entry is involved in disease pathogenesis.</text>
</comment>
<comment type="disease" evidence="10">
    <disease id="DI-01851">
        <name>Leukemia, juvenile myelomonocytic</name>
        <acronym>JMML</acronym>
        <description>An aggressive pediatric myelodysplastic syndrome/myeloproliferative disorder characterized by malignant transformation in the hematopoietic stem cell compartment with proliferation of differentiated progeny. Patients have splenomegaly, enlarged lymph nodes, rashes, and hemorrhages.</description>
        <dbReference type="MIM" id="607785"/>
    </disease>
    <text>The gene represented in this entry is involved in disease pathogenesis.</text>
</comment>
<comment type="sequence caution" evidence="16">
    <conflict type="erroneous initiation">
        <sequence resource="EMBL-CDS" id="AAI46777"/>
    </conflict>
    <text>Truncated N-terminus.</text>
</comment>
<comment type="sequence caution" evidence="16">
    <conflict type="erroneous initiation">
        <sequence resource="EMBL-CDS" id="BAA24826"/>
    </conflict>
    <text>Extended N-terminus.</text>
</comment>
<comment type="sequence caution" evidence="16">
    <conflict type="erroneous initiation">
        <sequence resource="EMBL-CDS" id="BAA82444"/>
    </conflict>
    <text>Truncated N-terminus.</text>
</comment>
<comment type="online information" name="Atlas of Genetics and Cytogenetics in Oncology and Haematology">
    <link uri="https://atlasgeneticsoncology.org/gene/44031/SETBP1"/>
</comment>
<name>SETBP_HUMAN</name>
<keyword id="KW-0007">Acetylation</keyword>
<keyword id="KW-0025">Alternative splicing</keyword>
<keyword id="KW-0225">Disease variant</keyword>
<keyword id="KW-0238">DNA-binding</keyword>
<keyword id="KW-0991">Intellectual disability</keyword>
<keyword id="KW-0539">Nucleus</keyword>
<keyword id="KW-1267">Proteomics identification</keyword>
<keyword id="KW-1185">Reference proteome</keyword>
<keyword id="KW-0677">Repeat</keyword>